<sequence length="60" mass="6745">MAKIKITWVKSTIGYKFDQAATIKALGFKKLNQSVIQDDSSAIRGMILKVRHLVVLEEVI</sequence>
<comment type="subunit">
    <text evidence="1">Part of the 50S ribosomal subunit.</text>
</comment>
<comment type="similarity">
    <text evidence="1">Belongs to the universal ribosomal protein uL30 family.</text>
</comment>
<dbReference type="EMBL" id="CP000688">
    <property type="protein sequence ID" value="ABQ17054.1"/>
    <property type="molecule type" value="Genomic_DNA"/>
</dbReference>
<dbReference type="SMR" id="A5FRW2"/>
<dbReference type="KEGG" id="deb:DehaBAV1_0469"/>
<dbReference type="PATRIC" id="fig|216389.18.peg.512"/>
<dbReference type="HOGENOM" id="CLU_131047_2_1_0"/>
<dbReference type="GO" id="GO:0022625">
    <property type="term" value="C:cytosolic large ribosomal subunit"/>
    <property type="evidence" value="ECO:0007669"/>
    <property type="project" value="TreeGrafter"/>
</dbReference>
<dbReference type="GO" id="GO:0003735">
    <property type="term" value="F:structural constituent of ribosome"/>
    <property type="evidence" value="ECO:0007669"/>
    <property type="project" value="InterPro"/>
</dbReference>
<dbReference type="GO" id="GO:0006412">
    <property type="term" value="P:translation"/>
    <property type="evidence" value="ECO:0007669"/>
    <property type="project" value="UniProtKB-UniRule"/>
</dbReference>
<dbReference type="CDD" id="cd01658">
    <property type="entry name" value="Ribosomal_L30"/>
    <property type="match status" value="1"/>
</dbReference>
<dbReference type="Gene3D" id="3.30.1390.20">
    <property type="entry name" value="Ribosomal protein L30, ferredoxin-like fold domain"/>
    <property type="match status" value="1"/>
</dbReference>
<dbReference type="HAMAP" id="MF_01371_B">
    <property type="entry name" value="Ribosomal_uL30_B"/>
    <property type="match status" value="1"/>
</dbReference>
<dbReference type="InterPro" id="IPR036919">
    <property type="entry name" value="Ribo_uL30_ferredoxin-like_sf"/>
</dbReference>
<dbReference type="InterPro" id="IPR005996">
    <property type="entry name" value="Ribosomal_uL30_bac-type"/>
</dbReference>
<dbReference type="InterPro" id="IPR016082">
    <property type="entry name" value="Ribosomal_uL30_ferredoxin-like"/>
</dbReference>
<dbReference type="NCBIfam" id="TIGR01308">
    <property type="entry name" value="rpmD_bact"/>
    <property type="match status" value="1"/>
</dbReference>
<dbReference type="PANTHER" id="PTHR15892:SF2">
    <property type="entry name" value="LARGE RIBOSOMAL SUBUNIT PROTEIN UL30M"/>
    <property type="match status" value="1"/>
</dbReference>
<dbReference type="PANTHER" id="PTHR15892">
    <property type="entry name" value="MITOCHONDRIAL RIBOSOMAL PROTEIN L30"/>
    <property type="match status" value="1"/>
</dbReference>
<dbReference type="Pfam" id="PF00327">
    <property type="entry name" value="Ribosomal_L30"/>
    <property type="match status" value="1"/>
</dbReference>
<dbReference type="PIRSF" id="PIRSF002211">
    <property type="entry name" value="Ribosomal_L30_bac-type"/>
    <property type="match status" value="1"/>
</dbReference>
<dbReference type="SUPFAM" id="SSF55129">
    <property type="entry name" value="Ribosomal protein L30p/L7e"/>
    <property type="match status" value="1"/>
</dbReference>
<keyword id="KW-0687">Ribonucleoprotein</keyword>
<keyword id="KW-0689">Ribosomal protein</keyword>
<reference key="1">
    <citation type="submission" date="2007-05" db="EMBL/GenBank/DDBJ databases">
        <title>Complete sequence of Dehalococcoides sp. BAV1.</title>
        <authorList>
            <consortium name="US DOE Joint Genome Institute"/>
            <person name="Copeland A."/>
            <person name="Lucas S."/>
            <person name="Lapidus A."/>
            <person name="Barry K."/>
            <person name="Detter J.C."/>
            <person name="Glavina del Rio T."/>
            <person name="Hammon N."/>
            <person name="Israni S."/>
            <person name="Pitluck S."/>
            <person name="Lowry S."/>
            <person name="Clum A."/>
            <person name="Schmutz J."/>
            <person name="Larimer F."/>
            <person name="Land M."/>
            <person name="Hauser L."/>
            <person name="Kyrpides N."/>
            <person name="Kim E."/>
            <person name="Ritalahti K.M."/>
            <person name="Loeffler F."/>
            <person name="Richardson P."/>
        </authorList>
    </citation>
    <scope>NUCLEOTIDE SEQUENCE [LARGE SCALE GENOMIC DNA]</scope>
    <source>
        <strain>ATCC BAA-2100 / JCM 16839 / KCTC 5957 / BAV1</strain>
    </source>
</reference>
<proteinExistence type="inferred from homology"/>
<organism>
    <name type="scientific">Dehalococcoides mccartyi (strain ATCC BAA-2100 / JCM 16839 / KCTC 5957 / BAV1)</name>
    <dbReference type="NCBI Taxonomy" id="216389"/>
    <lineage>
        <taxon>Bacteria</taxon>
        <taxon>Bacillati</taxon>
        <taxon>Chloroflexota</taxon>
        <taxon>Dehalococcoidia</taxon>
        <taxon>Dehalococcoidales</taxon>
        <taxon>Dehalococcoidaceae</taxon>
        <taxon>Dehalococcoides</taxon>
    </lineage>
</organism>
<protein>
    <recommendedName>
        <fullName evidence="1">Large ribosomal subunit protein uL30</fullName>
    </recommendedName>
    <alternativeName>
        <fullName evidence="2">50S ribosomal protein L30</fullName>
    </alternativeName>
</protein>
<accession>A5FRW2</accession>
<name>RL30_DEHMB</name>
<feature type="chain" id="PRO_0000347094" description="Large ribosomal subunit protein uL30">
    <location>
        <begin position="1"/>
        <end position="60"/>
    </location>
</feature>
<evidence type="ECO:0000255" key="1">
    <source>
        <dbReference type="HAMAP-Rule" id="MF_01371"/>
    </source>
</evidence>
<evidence type="ECO:0000305" key="2"/>
<gene>
    <name evidence="1" type="primary">rpmD</name>
    <name type="ordered locus">DehaBAV1_0469</name>
</gene>